<organism>
    <name type="scientific">Homo sapiens</name>
    <name type="common">Human</name>
    <dbReference type="NCBI Taxonomy" id="9606"/>
    <lineage>
        <taxon>Eukaryota</taxon>
        <taxon>Metazoa</taxon>
        <taxon>Chordata</taxon>
        <taxon>Craniata</taxon>
        <taxon>Vertebrata</taxon>
        <taxon>Euteleostomi</taxon>
        <taxon>Mammalia</taxon>
        <taxon>Eutheria</taxon>
        <taxon>Euarchontoglires</taxon>
        <taxon>Primates</taxon>
        <taxon>Haplorrhini</taxon>
        <taxon>Catarrhini</taxon>
        <taxon>Hominidae</taxon>
        <taxon>Homo</taxon>
    </lineage>
</organism>
<sequence length="277" mass="31544">MSLCEDMLLCNYRKCRIKLSGYAWVTACSHIFCDQHGSGEFSRSPAICPACNSTLSGKLDIVRTELSPSEEYKAMVLAGLRPEIVLDISSRALAFWTYQVHQERLYQEYNFSKAEGHLKQMEKIYTQQIQSKDVELTSMKGEVTSMKKVLEEYKKKFSDISEKLMERNRQYQKLQGLYDSLRLRNITIANHEGTLEPSMIAQSGVLGFPLGNNSKFPLDNTPVRNRGDGDGDFQFRPFFAGSPTAPEPSNSFFSFVSPSRELEQQQVSSRAFKVKRI</sequence>
<accession>Q9NPC3</accession>
<feature type="chain" id="PRO_0000055874" description="E3 ubiquitin-protein ligase CCNB1IP1">
    <location>
        <begin position="1"/>
        <end position="277"/>
    </location>
</feature>
<feature type="zinc finger region" description="RING-type; atypical">
    <location>
        <begin position="4"/>
        <end position="51"/>
    </location>
</feature>
<feature type="coiled-coil region" evidence="2">
    <location>
        <begin position="127"/>
        <end position="182"/>
    </location>
</feature>
<feature type="mutagenesis site" description="Abrogates induction of filamentous growth in yeast; when associated with A-30 and A-33." evidence="3">
    <original>C</original>
    <variation>A</variation>
    <location>
        <position position="28"/>
    </location>
</feature>
<feature type="mutagenesis site" description="Abrogates induction of filamentous growth in yeast; when associated with A-28 and A-33." evidence="3">
    <original>H</original>
    <variation>A</variation>
    <location>
        <position position="30"/>
    </location>
</feature>
<feature type="mutagenesis site" description="Abrogates induction of filamentous growth in yeast; when associated with A-28 and A-30." evidence="3">
    <original>C</original>
    <variation>A</variation>
    <location>
        <position position="33"/>
    </location>
</feature>
<protein>
    <recommendedName>
        <fullName>E3 ubiquitin-protein ligase CCNB1IP1</fullName>
        <ecNumber evidence="3">2.3.2.27</ecNumber>
    </recommendedName>
    <alternativeName>
        <fullName>Cyclin-B1-interacting protein 1</fullName>
    </alternativeName>
    <alternativeName>
        <fullName>Human enhancer of invasion 10</fullName>
    </alternativeName>
    <alternativeName>
        <fullName evidence="6">RING-type E3 ubiquitin transferase CCNB1IP1</fullName>
    </alternativeName>
</protein>
<comment type="function">
    <text evidence="1 3 5">Ubiquitin E3 ligase that acts as a limiting factor for crossing-over during meiosis: required during zygonema to limit the colocalization of RNF212 with MutS-gamma-associated recombination sites and thereby establish early differentiation of crossover and non-crossover sites. Later, it is directed by MutL-gamma to stably accumulate at designated crossover sites. Probably promotes the dissociation of RNF212 and MutS-gamma to allow the progression of recombination and the implementation of the final steps of crossing over (By similarity). Modulates cyclin-B levels and participates in the regulation of cell cycle progression through the G2 phase. Overexpression causes delayed entry into mitosis.</text>
</comment>
<comment type="catalytic activity">
    <reaction evidence="3">
        <text>S-ubiquitinyl-[E2 ubiquitin-conjugating enzyme]-L-cysteine + [acceptor protein]-L-lysine = [E2 ubiquitin-conjugating enzyme]-L-cysteine + N(6)-ubiquitinyl-[acceptor protein]-L-lysine.</text>
        <dbReference type="EC" id="2.3.2.27"/>
    </reaction>
</comment>
<comment type="pathway">
    <text>Protein modification; protein ubiquitination.</text>
</comment>
<comment type="subunit">
    <text evidence="3 4">Interacts with CCNB1, UBE2L3 and NF2.</text>
</comment>
<comment type="interaction">
    <interactant intactId="EBI-745269">
        <id>Q9NPC3</id>
    </interactant>
    <interactant intactId="EBI-930964">
        <id>P54253</id>
        <label>ATXN1</label>
    </interactant>
    <organismsDiffer>false</organismsDiffer>
    <experiments>6</experiments>
</comment>
<comment type="interaction">
    <interactant intactId="EBI-745269">
        <id>Q9NPC3</id>
    </interactant>
    <interactant intactId="EBI-495332">
        <id>P14635</id>
        <label>CCNB1</label>
    </interactant>
    <organismsDiffer>false</organismsDiffer>
    <experiments>2</experiments>
</comment>
<comment type="interaction">
    <interactant intactId="EBI-745269">
        <id>Q9NPC3</id>
    </interactant>
    <interactant intactId="EBI-745269">
        <id>Q9NPC3</id>
        <label>CCNB1IP1</label>
    </interactant>
    <organismsDiffer>false</organismsDiffer>
    <experiments>3</experiments>
</comment>
<comment type="interaction">
    <interactant intactId="EBI-745269">
        <id>Q9NPC3</id>
    </interactant>
    <interactant intactId="EBI-1057139">
        <id>Q93034</id>
        <label>CUL5</label>
    </interactant>
    <organismsDiffer>false</organismsDiffer>
    <experiments>3</experiments>
</comment>
<comment type="interaction">
    <interactant intactId="EBI-745269">
        <id>Q9NPC3</id>
    </interactant>
    <interactant intactId="EBI-6255981">
        <id>Q7L775</id>
        <label>EPM2AIP1</label>
    </interactant>
    <organismsDiffer>false</organismsDiffer>
    <experiments>4</experiments>
</comment>
<comment type="interaction">
    <interactant intactId="EBI-745269">
        <id>Q9NPC3</id>
    </interactant>
    <interactant intactId="EBI-1052479">
        <id>P16402</id>
        <label>H1-3</label>
    </interactant>
    <organismsDiffer>false</organismsDiffer>
    <experiments>2</experiments>
</comment>
<comment type="interaction">
    <interactant intactId="EBI-745269">
        <id>Q9NPC3</id>
    </interactant>
    <interactant intactId="EBI-466029">
        <id>P42858</id>
        <label>HTT</label>
    </interactant>
    <organismsDiffer>false</organismsDiffer>
    <experiments>6</experiments>
</comment>
<comment type="interaction">
    <interactant intactId="EBI-745269">
        <id>Q9NPC3</id>
    </interactant>
    <interactant intactId="EBI-751001">
        <id>Q14145</id>
        <label>KEAP1</label>
    </interactant>
    <organismsDiffer>false</organismsDiffer>
    <experiments>4</experiments>
</comment>
<comment type="interaction">
    <interactant intactId="EBI-745269">
        <id>Q9NPC3</id>
    </interactant>
    <interactant intactId="EBI-739566">
        <id>P19012</id>
        <label>KRT15</label>
    </interactant>
    <organismsDiffer>false</organismsDiffer>
    <experiments>4</experiments>
</comment>
<comment type="interaction">
    <interactant intactId="EBI-745269">
        <id>Q9NPC3</id>
    </interactant>
    <interactant intactId="EBI-741158">
        <id>Q96HA8</id>
        <label>NTAQ1</label>
    </interactant>
    <organismsDiffer>false</organismsDiffer>
    <experiments>3</experiments>
</comment>
<comment type="interaction">
    <interactant intactId="EBI-745269">
        <id>Q9NPC3</id>
    </interactant>
    <interactant intactId="EBI-1383852">
        <id>P54646</id>
        <label>PRKAA2</label>
    </interactant>
    <organismsDiffer>false</organismsDiffer>
    <experiments>4</experiments>
</comment>
<comment type="interaction">
    <interactant intactId="EBI-745269">
        <id>Q9NPC3</id>
    </interactant>
    <interactant intactId="EBI-745392">
        <id>Q9BSW7</id>
        <label>SYT17</label>
    </interactant>
    <organismsDiffer>false</organismsDiffer>
    <experiments>3</experiments>
</comment>
<comment type="interaction">
    <interactant intactId="EBI-745269">
        <id>Q9NPC3</id>
    </interactant>
    <interactant intactId="EBI-412964">
        <id>P62972</id>
    </interactant>
    <organismsDiffer>true</organismsDiffer>
    <experiments>2</experiments>
</comment>
<comment type="subcellular location">
    <subcellularLocation>
        <location>Nucleus</location>
    </subcellularLocation>
    <subcellularLocation>
        <location>Chromosome</location>
    </subcellularLocation>
    <text>Associates to the synaptonemal complex.</text>
</comment>
<comment type="tissue specificity">
    <text evidence="3">Highly expressed in heart. Detected at intermediate levels in liver and kidney, and at low levels in placenta, brain and lung.</text>
</comment>
<comment type="PTM">
    <text evidence="3">Ubiquitinated; autoubiquitinated.</text>
</comment>
<comment type="PTM">
    <text evidence="3">Phosphorylated by CDK1 on serine or threonine residues (in vitro).</text>
</comment>
<proteinExistence type="evidence at protein level"/>
<dbReference type="EC" id="2.3.2.27" evidence="3"/>
<dbReference type="EMBL" id="AF216381">
    <property type="protein sequence ID" value="AAF36386.1"/>
    <property type="molecule type" value="mRNA"/>
</dbReference>
<dbReference type="EMBL" id="AL161994">
    <property type="protein sequence ID" value="CAB82326.1"/>
    <property type="molecule type" value="mRNA"/>
</dbReference>
<dbReference type="EMBL" id="AK026233">
    <property type="protein sequence ID" value="BAB15403.1"/>
    <property type="molecule type" value="mRNA"/>
</dbReference>
<dbReference type="EMBL" id="BX161423">
    <property type="protein sequence ID" value="CAD61896.1"/>
    <property type="molecule type" value="mRNA"/>
</dbReference>
<dbReference type="EMBL" id="BX161424">
    <property type="protein sequence ID" value="CAD61897.1"/>
    <property type="molecule type" value="mRNA"/>
</dbReference>
<dbReference type="EMBL" id="BX247978">
    <property type="protein sequence ID" value="CAD62312.1"/>
    <property type="molecule type" value="mRNA"/>
</dbReference>
<dbReference type="EMBL" id="BC000369">
    <property type="protein sequence ID" value="AAH00369.1"/>
    <property type="molecule type" value="mRNA"/>
</dbReference>
<dbReference type="EMBL" id="BC001218">
    <property type="protein sequence ID" value="AAH01218.1"/>
    <property type="molecule type" value="mRNA"/>
</dbReference>
<dbReference type="EMBL" id="BC004435">
    <property type="protein sequence ID" value="AAH04435.1"/>
    <property type="molecule type" value="mRNA"/>
</dbReference>
<dbReference type="CCDS" id="CCDS9547.1"/>
<dbReference type="PIR" id="T47153">
    <property type="entry name" value="T47153"/>
</dbReference>
<dbReference type="RefSeq" id="NP_067001.3">
    <property type="nucleotide sequence ID" value="NM_021178.4"/>
</dbReference>
<dbReference type="RefSeq" id="NP_878269.1">
    <property type="nucleotide sequence ID" value="NM_182849.3"/>
</dbReference>
<dbReference type="RefSeq" id="NP_878272.1">
    <property type="nucleotide sequence ID" value="NM_182852.4"/>
</dbReference>
<dbReference type="SMR" id="Q9NPC3"/>
<dbReference type="BioGRID" id="121779">
    <property type="interactions" value="22"/>
</dbReference>
<dbReference type="FunCoup" id="Q9NPC3">
    <property type="interactions" value="69"/>
</dbReference>
<dbReference type="IntAct" id="Q9NPC3">
    <property type="interactions" value="16"/>
</dbReference>
<dbReference type="STRING" id="9606.ENSP00000409896"/>
<dbReference type="GlyGen" id="Q9NPC3">
    <property type="glycosylation" value="1 site, 1 O-linked glycan (1 site)"/>
</dbReference>
<dbReference type="iPTMnet" id="Q9NPC3"/>
<dbReference type="PhosphoSitePlus" id="Q9NPC3"/>
<dbReference type="BioMuta" id="CCNB1IP1"/>
<dbReference type="DMDM" id="37078756"/>
<dbReference type="MassIVE" id="Q9NPC3"/>
<dbReference type="PaxDb" id="9606-ENSP00000409896"/>
<dbReference type="PeptideAtlas" id="Q9NPC3"/>
<dbReference type="ProteomicsDB" id="81965"/>
<dbReference type="Antibodypedia" id="22006">
    <property type="antibodies" value="226 antibodies from 26 providers"/>
</dbReference>
<dbReference type="DNASU" id="57820"/>
<dbReference type="Ensembl" id="ENST00000353689.8">
    <property type="protein sequence ID" value="ENSP00000337396.4"/>
    <property type="gene ID" value="ENSG00000100814.19"/>
</dbReference>
<dbReference type="Ensembl" id="ENST00000358932.9">
    <property type="protein sequence ID" value="ENSP00000351810.4"/>
    <property type="gene ID" value="ENSG00000100814.19"/>
</dbReference>
<dbReference type="Ensembl" id="ENST00000398160.6">
    <property type="protein sequence ID" value="ENSP00000381226.2"/>
    <property type="gene ID" value="ENSG00000100814.19"/>
</dbReference>
<dbReference type="Ensembl" id="ENST00000398163.6">
    <property type="protein sequence ID" value="ENSP00000381229.2"/>
    <property type="gene ID" value="ENSG00000100814.19"/>
</dbReference>
<dbReference type="Ensembl" id="ENST00000398169.7">
    <property type="protein sequence ID" value="ENSP00000381235.3"/>
    <property type="gene ID" value="ENSG00000100814.19"/>
</dbReference>
<dbReference type="Ensembl" id="ENST00000708737.1">
    <property type="protein sequence ID" value="ENSP00000517311.1"/>
    <property type="gene ID" value="ENSG00000291784.1"/>
</dbReference>
<dbReference type="Ensembl" id="ENST00000708738.1">
    <property type="protein sequence ID" value="ENSP00000517312.1"/>
    <property type="gene ID" value="ENSG00000291784.1"/>
</dbReference>
<dbReference type="Ensembl" id="ENST00000708739.1">
    <property type="protein sequence ID" value="ENSP00000517313.1"/>
    <property type="gene ID" value="ENSG00000291784.1"/>
</dbReference>
<dbReference type="Ensembl" id="ENST00000708740.1">
    <property type="protein sequence ID" value="ENSP00000517314.1"/>
    <property type="gene ID" value="ENSG00000291784.1"/>
</dbReference>
<dbReference type="Ensembl" id="ENST00000708741.1">
    <property type="protein sequence ID" value="ENSP00000517315.1"/>
    <property type="gene ID" value="ENSG00000291784.1"/>
</dbReference>
<dbReference type="Ensembl" id="ENST00000708742.1">
    <property type="protein sequence ID" value="ENSP00000517316.1"/>
    <property type="gene ID" value="ENSG00000291784.1"/>
</dbReference>
<dbReference type="GeneID" id="57820"/>
<dbReference type="KEGG" id="hsa:57820"/>
<dbReference type="MANE-Select" id="ENST00000358932.9">
    <property type="protein sequence ID" value="ENSP00000351810.4"/>
    <property type="RefSeq nucleotide sequence ID" value="NM_021178.5"/>
    <property type="RefSeq protein sequence ID" value="NP_067001.3"/>
</dbReference>
<dbReference type="UCSC" id="uc001vwv.5">
    <property type="organism name" value="human"/>
</dbReference>
<dbReference type="AGR" id="HGNC:19437"/>
<dbReference type="CTD" id="57820"/>
<dbReference type="DisGeNET" id="57820"/>
<dbReference type="GeneCards" id="CCNB1IP1"/>
<dbReference type="HGNC" id="HGNC:19437">
    <property type="gene designation" value="CCNB1IP1"/>
</dbReference>
<dbReference type="HPA" id="ENSG00000100814">
    <property type="expression patterns" value="Low tissue specificity"/>
</dbReference>
<dbReference type="MIM" id="608249">
    <property type="type" value="gene"/>
</dbReference>
<dbReference type="neXtProt" id="NX_Q9NPC3"/>
<dbReference type="OpenTargets" id="ENSG00000100814"/>
<dbReference type="PharmGKB" id="PA134863884"/>
<dbReference type="VEuPathDB" id="HostDB:ENSG00000100814"/>
<dbReference type="eggNOG" id="ENOG502RMFV">
    <property type="taxonomic scope" value="Eukaryota"/>
</dbReference>
<dbReference type="GeneTree" id="ENSGT00390000002849"/>
<dbReference type="HOGENOM" id="CLU_049340_3_0_1"/>
<dbReference type="InParanoid" id="Q9NPC3"/>
<dbReference type="OMA" id="HFRPFFV"/>
<dbReference type="OrthoDB" id="441210at2759"/>
<dbReference type="PAN-GO" id="Q9NPC3">
    <property type="GO annotations" value="1 GO annotation based on evolutionary models"/>
</dbReference>
<dbReference type="PhylomeDB" id="Q9NPC3"/>
<dbReference type="TreeFam" id="TF328863"/>
<dbReference type="PathwayCommons" id="Q9NPC3"/>
<dbReference type="SignaLink" id="Q9NPC3"/>
<dbReference type="SIGNOR" id="Q9NPC3"/>
<dbReference type="UniPathway" id="UPA00143"/>
<dbReference type="BioGRID-ORCS" id="57820">
    <property type="hits" value="14 hits in 1194 CRISPR screens"/>
</dbReference>
<dbReference type="ChiTaRS" id="CCNB1IP1">
    <property type="organism name" value="human"/>
</dbReference>
<dbReference type="GeneWiki" id="CCNB1IP1"/>
<dbReference type="GenomeRNAi" id="57820"/>
<dbReference type="Pharos" id="Q9NPC3">
    <property type="development level" value="Tbio"/>
</dbReference>
<dbReference type="PRO" id="PR:Q9NPC3"/>
<dbReference type="Proteomes" id="UP000005640">
    <property type="component" value="Chromosome 14"/>
</dbReference>
<dbReference type="RNAct" id="Q9NPC3">
    <property type="molecule type" value="protein"/>
</dbReference>
<dbReference type="Bgee" id="ENSG00000100814">
    <property type="expression patterns" value="Expressed in left ovary and 203 other cell types or tissues"/>
</dbReference>
<dbReference type="ExpressionAtlas" id="Q9NPC3">
    <property type="expression patterns" value="baseline and differential"/>
</dbReference>
<dbReference type="GO" id="GO:0000795">
    <property type="term" value="C:synaptonemal complex"/>
    <property type="evidence" value="ECO:0007669"/>
    <property type="project" value="Ensembl"/>
</dbReference>
<dbReference type="GO" id="GO:0042802">
    <property type="term" value="F:identical protein binding"/>
    <property type="evidence" value="ECO:0000353"/>
    <property type="project" value="IntAct"/>
</dbReference>
<dbReference type="GO" id="GO:0061630">
    <property type="term" value="F:ubiquitin protein ligase activity"/>
    <property type="evidence" value="ECO:0007669"/>
    <property type="project" value="InterPro"/>
</dbReference>
<dbReference type="GO" id="GO:0008270">
    <property type="term" value="F:zinc ion binding"/>
    <property type="evidence" value="ECO:0007669"/>
    <property type="project" value="UniProtKB-KW"/>
</dbReference>
<dbReference type="GO" id="GO:0001825">
    <property type="term" value="P:blastocyst formation"/>
    <property type="evidence" value="ECO:0007669"/>
    <property type="project" value="Ensembl"/>
</dbReference>
<dbReference type="GO" id="GO:0051026">
    <property type="term" value="P:chiasma assembly"/>
    <property type="evidence" value="ECO:0000250"/>
    <property type="project" value="UniProtKB"/>
</dbReference>
<dbReference type="GO" id="GO:0016567">
    <property type="term" value="P:protein ubiquitination"/>
    <property type="evidence" value="ECO:0007669"/>
    <property type="project" value="UniProtKB-UniPathway"/>
</dbReference>
<dbReference type="GO" id="GO:0007131">
    <property type="term" value="P:reciprocal meiotic recombination"/>
    <property type="evidence" value="ECO:0000250"/>
    <property type="project" value="UniProtKB"/>
</dbReference>
<dbReference type="GO" id="GO:0007286">
    <property type="term" value="P:spermatid development"/>
    <property type="evidence" value="ECO:0007669"/>
    <property type="project" value="Ensembl"/>
</dbReference>
<dbReference type="InterPro" id="IPR042448">
    <property type="entry name" value="CCNB1IP1"/>
</dbReference>
<dbReference type="InterPro" id="IPR001841">
    <property type="entry name" value="Znf_RING"/>
</dbReference>
<dbReference type="PANTHER" id="PTHR14305">
    <property type="entry name" value="E3 UBIQUITIN-PROTEIN LIGASE CCNB1IP1"/>
    <property type="match status" value="1"/>
</dbReference>
<dbReference type="PANTHER" id="PTHR14305:SF0">
    <property type="entry name" value="E3 UBIQUITIN-PROTEIN LIGASE CCNB1IP1"/>
    <property type="match status" value="1"/>
</dbReference>
<dbReference type="Pfam" id="PF14634">
    <property type="entry name" value="zf-RING_5"/>
    <property type="match status" value="1"/>
</dbReference>
<name>CIP1_HUMAN</name>
<keyword id="KW-0158">Chromosome</keyword>
<keyword id="KW-0175">Coiled coil</keyword>
<keyword id="KW-0469">Meiosis</keyword>
<keyword id="KW-0479">Metal-binding</keyword>
<keyword id="KW-0539">Nucleus</keyword>
<keyword id="KW-0597">Phosphoprotein</keyword>
<keyword id="KW-1267">Proteomics identification</keyword>
<keyword id="KW-1185">Reference proteome</keyword>
<keyword id="KW-0808">Transferase</keyword>
<keyword id="KW-0832">Ubl conjugation</keyword>
<keyword id="KW-0833">Ubl conjugation pathway</keyword>
<keyword id="KW-0862">Zinc</keyword>
<keyword id="KW-0863">Zinc-finger</keyword>
<reference key="1">
    <citation type="journal article" date="2003" name="Mol. Cell. Biol.">
        <title>A novel RING finger protein, human enhancer of invasion 10, alters mitotic progression through regulation of cyclin B levels.</title>
        <authorList>
            <person name="Toby G.G."/>
            <person name="Gherraby W."/>
            <person name="Coleman T.R."/>
            <person name="Golemis E.A."/>
        </authorList>
    </citation>
    <scope>NUCLEOTIDE SEQUENCE [MRNA]</scope>
    <scope>MUTAGENESIS OF CYS-28; HIS-30 AND CYS-33</scope>
    <scope>FUNCTION</scope>
    <scope>CATALYTIC ACTIVITY</scope>
    <scope>INTERACTION WITH UBE2L3 AND CCNB1</scope>
    <scope>UBIQUITINATION</scope>
    <scope>PHOSPHORYLATION</scope>
    <scope>TISSUE SPECIFICITY</scope>
    <source>
        <tissue>Cervix carcinoma</tissue>
    </source>
</reference>
<reference key="2">
    <citation type="journal article" date="2007" name="BMC Genomics">
        <title>The full-ORF clone resource of the German cDNA consortium.</title>
        <authorList>
            <person name="Bechtel S."/>
            <person name="Rosenfelder H."/>
            <person name="Duda A."/>
            <person name="Schmidt C.P."/>
            <person name="Ernst U."/>
            <person name="Wellenreuther R."/>
            <person name="Mehrle A."/>
            <person name="Schuster C."/>
            <person name="Bahr A."/>
            <person name="Bloecker H."/>
            <person name="Heubner D."/>
            <person name="Hoerlein A."/>
            <person name="Michel G."/>
            <person name="Wedler H."/>
            <person name="Koehrer K."/>
            <person name="Ottenwaelder B."/>
            <person name="Poustka A."/>
            <person name="Wiemann S."/>
            <person name="Schupp I."/>
        </authorList>
    </citation>
    <scope>NUCLEOTIDE SEQUENCE [LARGE SCALE MRNA]</scope>
    <source>
        <tissue>Brain</tissue>
    </source>
</reference>
<reference key="3">
    <citation type="journal article" date="2004" name="Nat. Genet.">
        <title>Complete sequencing and characterization of 21,243 full-length human cDNAs.</title>
        <authorList>
            <person name="Ota T."/>
            <person name="Suzuki Y."/>
            <person name="Nishikawa T."/>
            <person name="Otsuki T."/>
            <person name="Sugiyama T."/>
            <person name="Irie R."/>
            <person name="Wakamatsu A."/>
            <person name="Hayashi K."/>
            <person name="Sato H."/>
            <person name="Nagai K."/>
            <person name="Kimura K."/>
            <person name="Makita H."/>
            <person name="Sekine M."/>
            <person name="Obayashi M."/>
            <person name="Nishi T."/>
            <person name="Shibahara T."/>
            <person name="Tanaka T."/>
            <person name="Ishii S."/>
            <person name="Yamamoto J."/>
            <person name="Saito K."/>
            <person name="Kawai Y."/>
            <person name="Isono Y."/>
            <person name="Nakamura Y."/>
            <person name="Nagahari K."/>
            <person name="Murakami K."/>
            <person name="Yasuda T."/>
            <person name="Iwayanagi T."/>
            <person name="Wagatsuma M."/>
            <person name="Shiratori A."/>
            <person name="Sudo H."/>
            <person name="Hosoiri T."/>
            <person name="Kaku Y."/>
            <person name="Kodaira H."/>
            <person name="Kondo H."/>
            <person name="Sugawara M."/>
            <person name="Takahashi M."/>
            <person name="Kanda K."/>
            <person name="Yokoi T."/>
            <person name="Furuya T."/>
            <person name="Kikkawa E."/>
            <person name="Omura Y."/>
            <person name="Abe K."/>
            <person name="Kamihara K."/>
            <person name="Katsuta N."/>
            <person name="Sato K."/>
            <person name="Tanikawa M."/>
            <person name="Yamazaki M."/>
            <person name="Ninomiya K."/>
            <person name="Ishibashi T."/>
            <person name="Yamashita H."/>
            <person name="Murakawa K."/>
            <person name="Fujimori K."/>
            <person name="Tanai H."/>
            <person name="Kimata M."/>
            <person name="Watanabe M."/>
            <person name="Hiraoka S."/>
            <person name="Chiba Y."/>
            <person name="Ishida S."/>
            <person name="Ono Y."/>
            <person name="Takiguchi S."/>
            <person name="Watanabe S."/>
            <person name="Yosida M."/>
            <person name="Hotuta T."/>
            <person name="Kusano J."/>
            <person name="Kanehori K."/>
            <person name="Takahashi-Fujii A."/>
            <person name="Hara H."/>
            <person name="Tanase T.-O."/>
            <person name="Nomura Y."/>
            <person name="Togiya S."/>
            <person name="Komai F."/>
            <person name="Hara R."/>
            <person name="Takeuchi K."/>
            <person name="Arita M."/>
            <person name="Imose N."/>
            <person name="Musashino K."/>
            <person name="Yuuki H."/>
            <person name="Oshima A."/>
            <person name="Sasaki N."/>
            <person name="Aotsuka S."/>
            <person name="Yoshikawa Y."/>
            <person name="Matsunawa H."/>
            <person name="Ichihara T."/>
            <person name="Shiohata N."/>
            <person name="Sano S."/>
            <person name="Moriya S."/>
            <person name="Momiyama H."/>
            <person name="Satoh N."/>
            <person name="Takami S."/>
            <person name="Terashima Y."/>
            <person name="Suzuki O."/>
            <person name="Nakagawa S."/>
            <person name="Senoh A."/>
            <person name="Mizoguchi H."/>
            <person name="Goto Y."/>
            <person name="Shimizu F."/>
            <person name="Wakebe H."/>
            <person name="Hishigaki H."/>
            <person name="Watanabe T."/>
            <person name="Sugiyama A."/>
            <person name="Takemoto M."/>
            <person name="Kawakami B."/>
            <person name="Yamazaki M."/>
            <person name="Watanabe K."/>
            <person name="Kumagai A."/>
            <person name="Itakura S."/>
            <person name="Fukuzumi Y."/>
            <person name="Fujimori Y."/>
            <person name="Komiyama M."/>
            <person name="Tashiro H."/>
            <person name="Tanigami A."/>
            <person name="Fujiwara T."/>
            <person name="Ono T."/>
            <person name="Yamada K."/>
            <person name="Fujii Y."/>
            <person name="Ozaki K."/>
            <person name="Hirao M."/>
            <person name="Ohmori Y."/>
            <person name="Kawabata A."/>
            <person name="Hikiji T."/>
            <person name="Kobatake N."/>
            <person name="Inagaki H."/>
            <person name="Ikema Y."/>
            <person name="Okamoto S."/>
            <person name="Okitani R."/>
            <person name="Kawakami T."/>
            <person name="Noguchi S."/>
            <person name="Itoh T."/>
            <person name="Shigeta K."/>
            <person name="Senba T."/>
            <person name="Matsumura K."/>
            <person name="Nakajima Y."/>
            <person name="Mizuno T."/>
            <person name="Morinaga M."/>
            <person name="Sasaki M."/>
            <person name="Togashi T."/>
            <person name="Oyama M."/>
            <person name="Hata H."/>
            <person name="Watanabe M."/>
            <person name="Komatsu T."/>
            <person name="Mizushima-Sugano J."/>
            <person name="Satoh T."/>
            <person name="Shirai Y."/>
            <person name="Takahashi Y."/>
            <person name="Nakagawa K."/>
            <person name="Okumura K."/>
            <person name="Nagase T."/>
            <person name="Nomura N."/>
            <person name="Kikuchi H."/>
            <person name="Masuho Y."/>
            <person name="Yamashita R."/>
            <person name="Nakai K."/>
            <person name="Yada T."/>
            <person name="Nakamura Y."/>
            <person name="Ohara O."/>
            <person name="Isogai T."/>
            <person name="Sugano S."/>
        </authorList>
    </citation>
    <scope>NUCLEOTIDE SEQUENCE [LARGE SCALE MRNA]</scope>
    <source>
        <tissue>Small intestine</tissue>
    </source>
</reference>
<reference key="4">
    <citation type="submission" date="2003-02" db="EMBL/GenBank/DDBJ databases">
        <title>Full-length cDNA libraries and normalization.</title>
        <authorList>
            <person name="Li W.B."/>
            <person name="Gruber C."/>
            <person name="Jessee J."/>
            <person name="Polayes D."/>
        </authorList>
    </citation>
    <scope>NUCLEOTIDE SEQUENCE [LARGE SCALE MRNA]</scope>
    <source>
        <tissue>Fetal brain</tissue>
        <tissue>Placenta</tissue>
    </source>
</reference>
<reference key="5">
    <citation type="journal article" date="2004" name="Genome Res.">
        <title>The status, quality, and expansion of the NIH full-length cDNA project: the Mammalian Gene Collection (MGC).</title>
        <authorList>
            <consortium name="The MGC Project Team"/>
        </authorList>
    </citation>
    <scope>NUCLEOTIDE SEQUENCE [LARGE SCALE MRNA]</scope>
    <source>
        <tissue>Lung</tissue>
        <tissue>Muscle</tissue>
    </source>
</reference>
<reference key="6">
    <citation type="journal article" date="2006" name="Oncogene">
        <title>A functional association between merlin and HEI10, a cell cycle regulator.</title>
        <authorList>
            <person name="Gronholm M."/>
            <person name="Muranen T."/>
            <person name="Toby G.G."/>
            <person name="Utermark T."/>
            <person name="Hanemann C.O."/>
            <person name="Golemis E.A."/>
            <person name="Carpen O."/>
        </authorList>
    </citation>
    <scope>INTERACTION WITH NF2</scope>
</reference>
<reference key="7">
    <citation type="journal article" date="2007" name="Oncogene">
        <title>HEI10 negatively regulates cell invasion by inhibiting cyclin B/Cdk1 and other promotility proteins.</title>
        <authorList>
            <person name="Singh M.K."/>
            <person name="Nicolas E."/>
            <person name="Gherraby W."/>
            <person name="Dadke D."/>
            <person name="Lessin S."/>
            <person name="Golemis E.A."/>
        </authorList>
    </citation>
    <scope>FUNCTION</scope>
</reference>
<evidence type="ECO:0000250" key="1"/>
<evidence type="ECO:0000255" key="2"/>
<evidence type="ECO:0000269" key="3">
    <source>
    </source>
</evidence>
<evidence type="ECO:0000269" key="4">
    <source>
    </source>
</evidence>
<evidence type="ECO:0000269" key="5">
    <source>
    </source>
</evidence>
<evidence type="ECO:0000305" key="6"/>
<gene>
    <name type="primary">CCNB1IP1</name>
    <name type="synonym">C14orf18</name>
    <name type="synonym">HEI10</name>
</gene>